<protein>
    <recommendedName>
        <fullName evidence="1">ATP-dependent helicase/deoxyribonuclease subunit B</fullName>
        <ecNumber evidence="1">3.1.-.-</ecNumber>
    </recommendedName>
    <alternativeName>
        <fullName evidence="1">ATP-dependent helicase/nuclease subunit RexB</fullName>
    </alternativeName>
</protein>
<sequence length="1077" mass="123928">MKLLYTDINHDMTEILVNQAAHAAEAGWRIFYIAPNSLSFEKERAVLENLPQEASFAITITRFAQLARYFTLNQPNQKESLNDIGLAMIFYRALASFEDGQLKVFGRLKQDASFISQLVDLYKELQTANLSILDLKYLHSPEKFEDLLAIFLVVSDLLREGEYDNQSKIAFFTEQVRSGQLDVDLKNTILIVDGFTRFSAEEEALIKSLSSRCQEIIIGAYASQKAYKANFTNGNIYSAGVDFLRYLATTFQTKPEFILSKWESKSGFEMISKNIEGKHDFTNSSHILDDTAKDCITIWECINQKDEVEHVARAIRQKLYQGYRYKDILVLLGDVDSYKLQLSKIFEQYDIPYYFGKAETMAAHPLVHFMDSLSRIKRYRFRAEDVLNLFKTGIYGEISQDDLDYFEAYISYADIKGPKKFFTDFVVGAKKFDLGRLNTIRQSLLAPLESFVKTKKQDGIKTLNQFMFFLTQVGLSDNLSRLVGQMSENEQEKHQEVWKTFTDILEQFQTIFGQEKLNLDEFLSLLNSGMMQAEYRMVPATVDVVTVKSYDLVEPHSNQFVYALGMTQSHFPKIAQNKSLISDIERQLINDANDTDGHFDIMTRENLKKNHFAALSLFNAAKQALVLTIPQLLNESEDQMSPYLIELRDIGVPFNHKGRQSLKEEADNIGNYKALLSRVVDLYRSAIDKEMTKEEQTFWSVAVRYLRRQLTSKGIEIPIITDSLDTVTVSSDVMTRRFPEDDPLKLSSSALTTFYNNQYKYFLQYVLGLEEQDSIHPDMRHHGTYLHRVFEILMKNQGIESFEEKLNSAINKTNQEDVFKSLYSEDAESRYSLEILEDIARATATILRQDSQMTVESEEERFELMIDNTIKINGIIDRIDRLSDGSLGVVDYKSSAQKFDIQKFYNGLSPQLVTYIDAISRDKEVEQKPPIFGAMYLHMQEPKQDLSKIKNLDDLVTKNHQALTYKGLFSEAEKEFLANGKYHLKDSLYSEAEIAILQAHNQLLYKKASETIKSGKFLINPYTEDAKTVDGDQFKSITGFEADRHMARARALYKLPAKEKRQGFLTLMQQEEENDDL</sequence>
<keyword id="KW-0067">ATP-binding</keyword>
<keyword id="KW-0227">DNA damage</keyword>
<keyword id="KW-0234">DNA repair</keyword>
<keyword id="KW-0238">DNA-binding</keyword>
<keyword id="KW-0269">Exonuclease</keyword>
<keyword id="KW-0347">Helicase</keyword>
<keyword id="KW-0378">Hydrolase</keyword>
<keyword id="KW-0540">Nuclease</keyword>
<keyword id="KW-0547">Nucleotide-binding</keyword>
<accession>Q8E5U0</accession>
<reference key="1">
    <citation type="journal article" date="2002" name="Mol. Microbiol.">
        <title>Genome sequence of Streptococcus agalactiae, a pathogen causing invasive neonatal disease.</title>
        <authorList>
            <person name="Glaser P."/>
            <person name="Rusniok C."/>
            <person name="Buchrieser C."/>
            <person name="Chevalier F."/>
            <person name="Frangeul L."/>
            <person name="Msadek T."/>
            <person name="Zouine M."/>
            <person name="Couve E."/>
            <person name="Lalioui L."/>
            <person name="Poyart C."/>
            <person name="Trieu-Cuot P."/>
            <person name="Kunst F."/>
        </authorList>
    </citation>
    <scope>NUCLEOTIDE SEQUENCE [LARGE SCALE GENOMIC DNA]</scope>
    <source>
        <strain>NEM316</strain>
    </source>
</reference>
<comment type="function">
    <text evidence="1">The heterodimer acts as both an ATP-dependent DNA helicase and an ATP-dependent, dual-direction single-stranded exonuclease. Recognizes the chi site generating a DNA molecule suitable for the initiation of homologous recombination. This subunit has 5' -&gt; 3' nuclease activity but not helicase activity.</text>
</comment>
<comment type="cofactor">
    <cofactor evidence="1">
        <name>Mg(2+)</name>
        <dbReference type="ChEBI" id="CHEBI:18420"/>
    </cofactor>
</comment>
<comment type="subunit">
    <text evidence="1">Heterodimer of AddA and RexB.</text>
</comment>
<comment type="miscellaneous">
    <text evidence="1">Despite having helicase-like domains, this subunit does not have helicase activity.</text>
</comment>
<comment type="similarity">
    <text evidence="1">Belongs to the helicase family. AddB/RexB type 2 subfamily.</text>
</comment>
<organism>
    <name type="scientific">Streptococcus agalactiae serotype III (strain NEM316)</name>
    <dbReference type="NCBI Taxonomy" id="211110"/>
    <lineage>
        <taxon>Bacteria</taxon>
        <taxon>Bacillati</taxon>
        <taxon>Bacillota</taxon>
        <taxon>Bacilli</taxon>
        <taxon>Lactobacillales</taxon>
        <taxon>Streptococcaceae</taxon>
        <taxon>Streptococcus</taxon>
    </lineage>
</organism>
<name>ADDB_STRA3</name>
<feature type="chain" id="PRO_0000379388" description="ATP-dependent helicase/deoxyribonuclease subunit B">
    <location>
        <begin position="1"/>
        <end position="1077"/>
    </location>
</feature>
<evidence type="ECO:0000255" key="1">
    <source>
        <dbReference type="HAMAP-Rule" id="MF_01453"/>
    </source>
</evidence>
<proteinExistence type="inferred from homology"/>
<gene>
    <name evidence="1" type="primary">rexB</name>
    <name type="ordered locus">gbs0890</name>
</gene>
<dbReference type="EC" id="3.1.-.-" evidence="1"/>
<dbReference type="EMBL" id="AL766847">
    <property type="protein sequence ID" value="CAD46534.1"/>
    <property type="molecule type" value="Genomic_DNA"/>
</dbReference>
<dbReference type="RefSeq" id="WP_000772291.1">
    <property type="nucleotide sequence ID" value="NC_004368.1"/>
</dbReference>
<dbReference type="SMR" id="Q8E5U0"/>
<dbReference type="KEGG" id="san:gbs0890"/>
<dbReference type="eggNOG" id="COG3857">
    <property type="taxonomic scope" value="Bacteria"/>
</dbReference>
<dbReference type="HOGENOM" id="CLU_007838_1_0_9"/>
<dbReference type="Proteomes" id="UP000000823">
    <property type="component" value="Chromosome"/>
</dbReference>
<dbReference type="GO" id="GO:0008409">
    <property type="term" value="F:5'-3' exonuclease activity"/>
    <property type="evidence" value="ECO:0007669"/>
    <property type="project" value="UniProtKB-UniRule"/>
</dbReference>
<dbReference type="GO" id="GO:0005524">
    <property type="term" value="F:ATP binding"/>
    <property type="evidence" value="ECO:0007669"/>
    <property type="project" value="UniProtKB-UniRule"/>
</dbReference>
<dbReference type="GO" id="GO:0003690">
    <property type="term" value="F:double-stranded DNA binding"/>
    <property type="evidence" value="ECO:0007669"/>
    <property type="project" value="UniProtKB-UniRule"/>
</dbReference>
<dbReference type="GO" id="GO:0004386">
    <property type="term" value="F:helicase activity"/>
    <property type="evidence" value="ECO:0007669"/>
    <property type="project" value="UniProtKB-KW"/>
</dbReference>
<dbReference type="GO" id="GO:0016817">
    <property type="term" value="F:hydrolase activity, acting on acid anhydrides"/>
    <property type="evidence" value="ECO:0007669"/>
    <property type="project" value="InterPro"/>
</dbReference>
<dbReference type="GO" id="GO:0000724">
    <property type="term" value="P:double-strand break repair via homologous recombination"/>
    <property type="evidence" value="ECO:0007669"/>
    <property type="project" value="UniProtKB-UniRule"/>
</dbReference>
<dbReference type="Gene3D" id="3.90.320.10">
    <property type="match status" value="1"/>
</dbReference>
<dbReference type="Gene3D" id="3.40.50.300">
    <property type="entry name" value="P-loop containing nucleotide triphosphate hydrolases"/>
    <property type="match status" value="4"/>
</dbReference>
<dbReference type="HAMAP" id="MF_01453">
    <property type="entry name" value="AddB_type2"/>
    <property type="match status" value="1"/>
</dbReference>
<dbReference type="InterPro" id="IPR049035">
    <property type="entry name" value="ADDB_N"/>
</dbReference>
<dbReference type="InterPro" id="IPR014141">
    <property type="entry name" value="DNA_helicase_suRexB"/>
</dbReference>
<dbReference type="InterPro" id="IPR027417">
    <property type="entry name" value="P-loop_NTPase"/>
</dbReference>
<dbReference type="InterPro" id="IPR011604">
    <property type="entry name" value="PDDEXK-like_dom_sf"/>
</dbReference>
<dbReference type="InterPro" id="IPR038726">
    <property type="entry name" value="PDDEXK_AddAB-type"/>
</dbReference>
<dbReference type="InterPro" id="IPR011335">
    <property type="entry name" value="Restrct_endonuc-II-like"/>
</dbReference>
<dbReference type="NCBIfam" id="TIGR02774">
    <property type="entry name" value="rexB_recomb"/>
    <property type="match status" value="1"/>
</dbReference>
<dbReference type="PANTHER" id="PTHR30591">
    <property type="entry name" value="RECBCD ENZYME SUBUNIT RECC"/>
    <property type="match status" value="1"/>
</dbReference>
<dbReference type="PANTHER" id="PTHR30591:SF1">
    <property type="entry name" value="RECBCD ENZYME SUBUNIT RECC"/>
    <property type="match status" value="1"/>
</dbReference>
<dbReference type="Pfam" id="PF21445">
    <property type="entry name" value="ADDB_N"/>
    <property type="match status" value="1"/>
</dbReference>
<dbReference type="Pfam" id="PF12705">
    <property type="entry name" value="PDDEXK_1"/>
    <property type="match status" value="1"/>
</dbReference>
<dbReference type="SUPFAM" id="SSF52540">
    <property type="entry name" value="P-loop containing nucleoside triphosphate hydrolases"/>
    <property type="match status" value="1"/>
</dbReference>
<dbReference type="SUPFAM" id="SSF52980">
    <property type="entry name" value="Restriction endonuclease-like"/>
    <property type="match status" value="1"/>
</dbReference>